<comment type="function">
    <text evidence="1">NDH-1 shuttles electrons from NADH, via FMN and iron-sulfur (Fe-S) centers, to quinones in the respiratory chain. The immediate electron acceptor for the enzyme in this species is believed to be ubiquinone. Couples the redox reaction to proton translocation (for every two electrons transferred, four hydrogen ions are translocated across the cytoplasmic membrane), and thus conserves the redox energy in a proton gradient.</text>
</comment>
<comment type="catalytic activity">
    <reaction evidence="1">
        <text>a quinone + NADH + 5 H(+)(in) = a quinol + NAD(+) + 4 H(+)(out)</text>
        <dbReference type="Rhea" id="RHEA:57888"/>
        <dbReference type="ChEBI" id="CHEBI:15378"/>
        <dbReference type="ChEBI" id="CHEBI:24646"/>
        <dbReference type="ChEBI" id="CHEBI:57540"/>
        <dbReference type="ChEBI" id="CHEBI:57945"/>
        <dbReference type="ChEBI" id="CHEBI:132124"/>
    </reaction>
</comment>
<comment type="subunit">
    <text evidence="1">NDH-1 is composed of 13 different subunits. Subunits NuoB, CD, E, F, and G constitute the peripheral sector of the complex.</text>
</comment>
<comment type="subcellular location">
    <subcellularLocation>
        <location evidence="1">Cell inner membrane</location>
        <topology evidence="1">Peripheral membrane protein</topology>
        <orientation evidence="1">Cytoplasmic side</orientation>
    </subcellularLocation>
</comment>
<comment type="similarity">
    <text evidence="1">In the N-terminal section; belongs to the complex I 30 kDa subunit family.</text>
</comment>
<comment type="similarity">
    <text evidence="1">In the C-terminal section; belongs to the complex I 49 kDa subunit family.</text>
</comment>
<reference key="1">
    <citation type="journal article" date="2009" name="PLoS Genet.">
        <title>Organised genome dynamics in the Escherichia coli species results in highly diverse adaptive paths.</title>
        <authorList>
            <person name="Touchon M."/>
            <person name="Hoede C."/>
            <person name="Tenaillon O."/>
            <person name="Barbe V."/>
            <person name="Baeriswyl S."/>
            <person name="Bidet P."/>
            <person name="Bingen E."/>
            <person name="Bonacorsi S."/>
            <person name="Bouchier C."/>
            <person name="Bouvet O."/>
            <person name="Calteau A."/>
            <person name="Chiapello H."/>
            <person name="Clermont O."/>
            <person name="Cruveiller S."/>
            <person name="Danchin A."/>
            <person name="Diard M."/>
            <person name="Dossat C."/>
            <person name="Karoui M.E."/>
            <person name="Frapy E."/>
            <person name="Garry L."/>
            <person name="Ghigo J.M."/>
            <person name="Gilles A.M."/>
            <person name="Johnson J."/>
            <person name="Le Bouguenec C."/>
            <person name="Lescat M."/>
            <person name="Mangenot S."/>
            <person name="Martinez-Jehanne V."/>
            <person name="Matic I."/>
            <person name="Nassif X."/>
            <person name="Oztas S."/>
            <person name="Petit M.A."/>
            <person name="Pichon C."/>
            <person name="Rouy Z."/>
            <person name="Ruf C.S."/>
            <person name="Schneider D."/>
            <person name="Tourret J."/>
            <person name="Vacherie B."/>
            <person name="Vallenet D."/>
            <person name="Medigue C."/>
            <person name="Rocha E.P.C."/>
            <person name="Denamur E."/>
        </authorList>
    </citation>
    <scope>NUCLEOTIDE SEQUENCE [LARGE SCALE GENOMIC DNA]</scope>
    <source>
        <strain>UMN026 / ExPEC</strain>
    </source>
</reference>
<feature type="chain" id="PRO_1000143688" description="NADH-quinone oxidoreductase subunit C/D">
    <location>
        <begin position="1"/>
        <end position="600"/>
    </location>
</feature>
<feature type="region of interest" description="NADH dehydrogenase I subunit C" evidence="1">
    <location>
        <begin position="1"/>
        <end position="190"/>
    </location>
</feature>
<feature type="region of interest" description="NADH dehydrogenase I subunit D" evidence="1">
    <location>
        <begin position="214"/>
        <end position="600"/>
    </location>
</feature>
<protein>
    <recommendedName>
        <fullName evidence="1">NADH-quinone oxidoreductase subunit C/D</fullName>
        <ecNumber evidence="1">7.1.1.-</ecNumber>
    </recommendedName>
    <alternativeName>
        <fullName evidence="1">NADH dehydrogenase I subunit C/D</fullName>
    </alternativeName>
    <alternativeName>
        <fullName evidence="1">NDH-1 subunit C/D</fullName>
    </alternativeName>
</protein>
<proteinExistence type="inferred from homology"/>
<sequence length="600" mass="68725">MVNNMTDLTAQEPAWQTRDHLDDPVIGELRNRFGPDAFTVQATRTGVPVVWIKREQLLEVGDFLKKLPKPYVMLFDLHGMDERLRTHREGLPAADFSVFYHLISIDRNRDIMLKVALAENDLHVPTFTKLFPNANWYERETWDLFGITFDGHPNLRRIMMPQTWKGHPLRKDYPARATEFSPFELTKAKQDLEMEALTFKPEEWGMKRGTENEDFMFLNLGPNHPSAHGAFRIVLQLDGEEIVDCVPDIGYHHRGAEKMGERQSWHSYIPYTDRIEYLGGCVNEMPYVLAVEKLAGITVPDRVNVIRVMLSELFRINSHLLYISTFIQDVGAMTPVFFAFTDRQKIYDLVEAITGFRMHPAWFRIGGVAHDLPRGWDRLLREFLDWMPKRLASYEKAALQNTILKGRSQGVAAYGAKEALEWGTTGAGLRATGIDFDVRKARPYSGYENFDFEIPVGGGVSDCYTRVMLKVEELRQSLRILEQCLNNMPEGPFKADHPLTTPPPKERTLQHIETLITHFLQVSWGPVMPANESFQMIEATKGINSYYLTSDGSTMSYRTRIRTPSYAHLQQIPAAIRGSLVSDLIVYLGSIDFVMSDVDR</sequence>
<name>NUOCD_ECOLU</name>
<dbReference type="EC" id="7.1.1.-" evidence="1"/>
<dbReference type="EMBL" id="CU928163">
    <property type="protein sequence ID" value="CAR13807.1"/>
    <property type="molecule type" value="Genomic_DNA"/>
</dbReference>
<dbReference type="RefSeq" id="WP_000247878.1">
    <property type="nucleotide sequence ID" value="NC_011751.1"/>
</dbReference>
<dbReference type="RefSeq" id="YP_002413335.2">
    <property type="nucleotide sequence ID" value="NC_011751.1"/>
</dbReference>
<dbReference type="SMR" id="B7N5P8"/>
<dbReference type="STRING" id="585056.ECUMN_2625"/>
<dbReference type="GeneID" id="93774888"/>
<dbReference type="KEGG" id="eum:ECUMN_2625"/>
<dbReference type="PATRIC" id="fig|585056.7.peg.2806"/>
<dbReference type="HOGENOM" id="CLU_015134_3_2_6"/>
<dbReference type="Proteomes" id="UP000007097">
    <property type="component" value="Chromosome"/>
</dbReference>
<dbReference type="GO" id="GO:0030964">
    <property type="term" value="C:NADH dehydrogenase complex"/>
    <property type="evidence" value="ECO:0007669"/>
    <property type="project" value="InterPro"/>
</dbReference>
<dbReference type="GO" id="GO:0005886">
    <property type="term" value="C:plasma membrane"/>
    <property type="evidence" value="ECO:0007669"/>
    <property type="project" value="UniProtKB-SubCell"/>
</dbReference>
<dbReference type="GO" id="GO:0051287">
    <property type="term" value="F:NAD binding"/>
    <property type="evidence" value="ECO:0007669"/>
    <property type="project" value="InterPro"/>
</dbReference>
<dbReference type="GO" id="GO:0008137">
    <property type="term" value="F:NADH dehydrogenase (ubiquinone) activity"/>
    <property type="evidence" value="ECO:0007669"/>
    <property type="project" value="InterPro"/>
</dbReference>
<dbReference type="GO" id="GO:0050136">
    <property type="term" value="F:NADH:ubiquinone reductase (non-electrogenic) activity"/>
    <property type="evidence" value="ECO:0007669"/>
    <property type="project" value="UniProtKB-UniRule"/>
</dbReference>
<dbReference type="GO" id="GO:0048038">
    <property type="term" value="F:quinone binding"/>
    <property type="evidence" value="ECO:0007669"/>
    <property type="project" value="UniProtKB-KW"/>
</dbReference>
<dbReference type="FunFam" id="1.10.645.10:FF:000001">
    <property type="entry name" value="NADH-quinone oxidoreductase subunit C/D"/>
    <property type="match status" value="1"/>
</dbReference>
<dbReference type="FunFam" id="3.30.460.80:FF:000001">
    <property type="entry name" value="NADH-quinone oxidoreductase subunit C/D"/>
    <property type="match status" value="1"/>
</dbReference>
<dbReference type="Gene3D" id="1.10.645.10">
    <property type="entry name" value="Cytochrome-c3 Hydrogenase, chain B"/>
    <property type="match status" value="1"/>
</dbReference>
<dbReference type="Gene3D" id="3.30.460.80">
    <property type="entry name" value="NADH:ubiquinone oxidoreductase, 30kDa subunit"/>
    <property type="match status" value="1"/>
</dbReference>
<dbReference type="HAMAP" id="MF_01357">
    <property type="entry name" value="NDH1_NuoC"/>
    <property type="match status" value="1"/>
</dbReference>
<dbReference type="HAMAP" id="MF_01359">
    <property type="entry name" value="NDH1_NuoCD_1"/>
    <property type="match status" value="1"/>
</dbReference>
<dbReference type="HAMAP" id="MF_01358">
    <property type="entry name" value="NDH1_NuoD"/>
    <property type="match status" value="1"/>
</dbReference>
<dbReference type="InterPro" id="IPR010218">
    <property type="entry name" value="NADH_DH_suC"/>
</dbReference>
<dbReference type="InterPro" id="IPR023062">
    <property type="entry name" value="NADH_DH_suCD"/>
</dbReference>
<dbReference type="InterPro" id="IPR001135">
    <property type="entry name" value="NADH_Q_OxRdtase_suD"/>
</dbReference>
<dbReference type="InterPro" id="IPR037232">
    <property type="entry name" value="NADH_quin_OxRdtase_su_C/D-like"/>
</dbReference>
<dbReference type="InterPro" id="IPR001268">
    <property type="entry name" value="NADH_UbQ_OxRdtase_30kDa_su"/>
</dbReference>
<dbReference type="InterPro" id="IPR014029">
    <property type="entry name" value="NADH_UbQ_OxRdtase_49kDa_CS"/>
</dbReference>
<dbReference type="InterPro" id="IPR020396">
    <property type="entry name" value="NADH_UbQ_OxRdtase_CS"/>
</dbReference>
<dbReference type="InterPro" id="IPR022885">
    <property type="entry name" value="NDH1_su_D/H"/>
</dbReference>
<dbReference type="InterPro" id="IPR029014">
    <property type="entry name" value="NiFe-Hase_large"/>
</dbReference>
<dbReference type="NCBIfam" id="TIGR01961">
    <property type="entry name" value="NuoC_fam"/>
    <property type="match status" value="1"/>
</dbReference>
<dbReference type="NCBIfam" id="TIGR01962">
    <property type="entry name" value="NuoD"/>
    <property type="match status" value="1"/>
</dbReference>
<dbReference type="NCBIfam" id="NF004739">
    <property type="entry name" value="PRK06075.1"/>
    <property type="match status" value="1"/>
</dbReference>
<dbReference type="NCBIfam" id="NF008728">
    <property type="entry name" value="PRK11742.1"/>
    <property type="match status" value="1"/>
</dbReference>
<dbReference type="PANTHER" id="PTHR11993:SF45">
    <property type="entry name" value="NADH-QUINONE OXIDOREDUCTASE SUBUNIT C_D"/>
    <property type="match status" value="1"/>
</dbReference>
<dbReference type="PANTHER" id="PTHR11993">
    <property type="entry name" value="NADH-UBIQUINONE OXIDOREDUCTASE 49 KDA SUBUNIT"/>
    <property type="match status" value="1"/>
</dbReference>
<dbReference type="Pfam" id="PF00329">
    <property type="entry name" value="Complex1_30kDa"/>
    <property type="match status" value="1"/>
</dbReference>
<dbReference type="Pfam" id="PF00346">
    <property type="entry name" value="Complex1_49kDa"/>
    <property type="match status" value="1"/>
</dbReference>
<dbReference type="SUPFAM" id="SSF56762">
    <property type="entry name" value="HydB/Nqo4-like"/>
    <property type="match status" value="1"/>
</dbReference>
<dbReference type="SUPFAM" id="SSF143243">
    <property type="entry name" value="Nqo5-like"/>
    <property type="match status" value="1"/>
</dbReference>
<dbReference type="PROSITE" id="PS00542">
    <property type="entry name" value="COMPLEX1_30K"/>
    <property type="match status" value="1"/>
</dbReference>
<dbReference type="PROSITE" id="PS00535">
    <property type="entry name" value="COMPLEX1_49K"/>
    <property type="match status" value="1"/>
</dbReference>
<evidence type="ECO:0000255" key="1">
    <source>
        <dbReference type="HAMAP-Rule" id="MF_01359"/>
    </source>
</evidence>
<organism>
    <name type="scientific">Escherichia coli O17:K52:H18 (strain UMN026 / ExPEC)</name>
    <dbReference type="NCBI Taxonomy" id="585056"/>
    <lineage>
        <taxon>Bacteria</taxon>
        <taxon>Pseudomonadati</taxon>
        <taxon>Pseudomonadota</taxon>
        <taxon>Gammaproteobacteria</taxon>
        <taxon>Enterobacterales</taxon>
        <taxon>Enterobacteriaceae</taxon>
        <taxon>Escherichia</taxon>
    </lineage>
</organism>
<gene>
    <name evidence="1" type="primary">nuoC</name>
    <name evidence="1" type="synonym">nuoCD</name>
    <name evidence="1" type="synonym">nuoD</name>
    <name type="ordered locus">ECUMN_2625</name>
</gene>
<keyword id="KW-0997">Cell inner membrane</keyword>
<keyword id="KW-1003">Cell membrane</keyword>
<keyword id="KW-0472">Membrane</keyword>
<keyword id="KW-0511">Multifunctional enzyme</keyword>
<keyword id="KW-0520">NAD</keyword>
<keyword id="KW-0874">Quinone</keyword>
<keyword id="KW-1278">Translocase</keyword>
<keyword id="KW-0813">Transport</keyword>
<keyword id="KW-0830">Ubiquinone</keyword>
<accession>B7N5P8</accession>